<protein>
    <recommendedName>
        <fullName evidence="4">Anti-CBASS protein Acb1</fullName>
        <shortName evidence="4">Acb1</shortName>
    </recommendedName>
    <alternativeName>
        <fullName>Gene product 57B</fullName>
        <shortName>gp57B</shortName>
    </alternativeName>
</protein>
<feature type="chain" id="PRO_0000456664" description="Anti-CBASS protein Acb1">
    <location>
        <begin position="1"/>
        <end position="150"/>
    </location>
</feature>
<feature type="active site" evidence="1">
    <location>
        <position position="43"/>
    </location>
</feature>
<feature type="active site" evidence="1">
    <location>
        <position position="45"/>
    </location>
</feature>
<feature type="active site" evidence="1">
    <location>
        <position position="112"/>
    </location>
</feature>
<feature type="active site" evidence="1">
    <location>
        <position position="114"/>
    </location>
</feature>
<feature type="binding site" evidence="1">
    <location>
        <position position="11"/>
    </location>
    <ligand>
        <name>3',3'-cGAMP</name>
        <dbReference type="ChEBI" id="CHEBI:71501"/>
    </ligand>
</feature>
<feature type="binding site" evidence="1">
    <location>
        <position position="11"/>
    </location>
    <ligand>
        <name>3',3'-cUAMP</name>
        <dbReference type="ChEBI" id="CHEBI:143809"/>
    </ligand>
</feature>
<feature type="binding site" evidence="1">
    <location>
        <position position="73"/>
    </location>
    <ligand>
        <name>3',3'-cGAMP</name>
        <dbReference type="ChEBI" id="CHEBI:71501"/>
    </ligand>
</feature>
<feature type="binding site" evidence="1">
    <location>
        <position position="73"/>
    </location>
    <ligand>
        <name>3',3'-cUAMP</name>
        <dbReference type="ChEBI" id="CHEBI:143809"/>
    </ligand>
</feature>
<feature type="binding site" description="specific to adenosine" evidence="1">
    <location>
        <position position="142"/>
    </location>
    <ligand>
        <name>3',3'-cGAMP</name>
        <dbReference type="ChEBI" id="CHEBI:71501"/>
    </ligand>
</feature>
<feature type="binding site" description="specific to adenosine" evidence="1">
    <location>
        <position position="142"/>
    </location>
    <ligand>
        <name>3',3'-cUAMP</name>
        <dbReference type="ChEBI" id="CHEBI:143809"/>
    </ligand>
</feature>
<feature type="binding site" evidence="1">
    <location>
        <position position="148"/>
    </location>
    <ligand>
        <name>3',3'-cGAMP</name>
        <dbReference type="ChEBI" id="CHEBI:71501"/>
    </ligand>
</feature>
<feature type="binding site" evidence="1">
    <location>
        <position position="148"/>
    </location>
    <ligand>
        <name>3',3'-cUAMP</name>
        <dbReference type="ChEBI" id="CHEBI:143809"/>
    </ligand>
</feature>
<keyword id="KW-0945">Host-virus interaction</keyword>
<keyword id="KW-0378">Hydrolase</keyword>
<keyword id="KW-1090">Inhibition of host innate immune response by virus</keyword>
<keyword id="KW-1185">Reference proteome</keyword>
<keyword id="KW-0899">Viral immunoevasion</keyword>
<organismHost>
    <name type="scientific">Acinetobacter sp.</name>
    <dbReference type="NCBI Taxonomy" id="472"/>
</organismHost>
<sequence length="150" mass="17078">MKLSDIDKGTYAAVKFDDSTLDMFQALQQIMELFNPVPRDKLHSTICFSRVKIPYIPLTEKMPIGSTHKLEVFEHNGKRALVVLLDSPYLESRHEYANILGATFDFPTYNPHVTLAYDIGAMEIPKHGVTGNPVVITHEYTEDLDLNWKP</sequence>
<organism>
    <name type="scientific">Acinetobacter phage Ac42</name>
    <name type="common">Acinetobacter phage 42</name>
    <dbReference type="NCBI Taxonomy" id="762660"/>
    <lineage>
        <taxon>Viruses</taxon>
        <taxon>Duplodnaviria</taxon>
        <taxon>Heunggongvirae</taxon>
        <taxon>Uroviricota</taxon>
        <taxon>Caudoviricetes</taxon>
        <taxon>Straboviridae</taxon>
        <taxon>Twarogvirinae</taxon>
    </lineage>
</organism>
<reference key="1">
    <citation type="journal article" date="2010" name="Virol. J.">
        <title>Genomes of the T4-related bacteriophages as windows on microbial genome evolution.</title>
        <authorList>
            <person name="Petrov V.M."/>
            <person name="Ratnayaka S."/>
            <person name="Nolan J.M."/>
            <person name="Miller E.S."/>
            <person name="Karam J.D."/>
        </authorList>
    </citation>
    <scope>NUCLEOTIDE SEQUENCE [LARGE SCALE GENOMIC DNA]</scope>
</reference>
<reference key="2">
    <citation type="journal article" date="2022" name="Nature">
        <title>Phage anti-CBASS and anti-Pycsar nucleases subvert bacterial immunity.</title>
        <authorList>
            <person name="Hobbs S.J."/>
            <person name="Wein T."/>
            <person name="Lu A."/>
            <person name="Morehouse B.R."/>
            <person name="Schnabel J."/>
            <person name="Leavitt A."/>
            <person name="Yirmiya E."/>
            <person name="Sorek R."/>
            <person name="Kranzusch P.J."/>
        </authorList>
    </citation>
    <scope>FUNCTION</scope>
    <scope>CATALYTIC ACTIVITY</scope>
</reference>
<comment type="function">
    <text evidence="2 3">Counteracts the host CBASS antiviral defense system. Phosphodiesterase that enables metal-independent hydrolysis of the host cyclic di- and trinucleotide CBASS signals such as 3'3'-cGAMP, 3'3'cUA, and 3'3'3'-cAAA (PubMed:35395152). Does not cleave cGG or cA4 (By similarity). Besides evasion of the CBASS system, might also enable evasion of the type III CRISPR systems that use cA3 signals (By similarity).</text>
</comment>
<comment type="catalytic activity">
    <reaction evidence="3">
        <text>3',3'-cUAMP + H2O = U[3'-5']pAp[3'] + H(+)</text>
        <dbReference type="Rhea" id="RHEA:72835"/>
        <dbReference type="ChEBI" id="CHEBI:15377"/>
        <dbReference type="ChEBI" id="CHEBI:15378"/>
        <dbReference type="ChEBI" id="CHEBI:143809"/>
        <dbReference type="ChEBI" id="CHEBI:192498"/>
    </reaction>
    <physiologicalReaction direction="left-to-right" evidence="3">
        <dbReference type="Rhea" id="RHEA:72836"/>
    </physiologicalReaction>
</comment>
<comment type="catalytic activity">
    <reaction evidence="3">
        <text>3',3',3'-c-tri-AMP + H2O = A[3'-5']pA[3'-5']pAp[3'] + H(+)</text>
        <dbReference type="Rhea" id="RHEA:72859"/>
        <dbReference type="ChEBI" id="CHEBI:15377"/>
        <dbReference type="ChEBI" id="CHEBI:15378"/>
        <dbReference type="ChEBI" id="CHEBI:192523"/>
        <dbReference type="ChEBI" id="CHEBI:192530"/>
    </reaction>
    <physiologicalReaction direction="left-to-right" evidence="3">
        <dbReference type="Rhea" id="RHEA:72860"/>
    </physiologicalReaction>
</comment>
<comment type="catalytic activity">
    <reaction evidence="3">
        <text>3',3',3'-cAAG + H2O = G[3'-5']pA[3'-5']pAp[3'] + H(+)</text>
        <dbReference type="Rhea" id="RHEA:72863"/>
        <dbReference type="ChEBI" id="CHEBI:15377"/>
        <dbReference type="ChEBI" id="CHEBI:15378"/>
        <dbReference type="ChEBI" id="CHEBI:143810"/>
        <dbReference type="ChEBI" id="CHEBI:192532"/>
    </reaction>
    <physiologicalReaction direction="left-to-right" evidence="3">
        <dbReference type="Rhea" id="RHEA:72864"/>
    </physiologicalReaction>
</comment>
<comment type="catalytic activity">
    <reaction evidence="3">
        <text>3',3',3'-cAAG + H2O = A[3'-5']pG[3'-5']pAp[3'] + H(+)</text>
        <dbReference type="Rhea" id="RHEA:72867"/>
        <dbReference type="ChEBI" id="CHEBI:15377"/>
        <dbReference type="ChEBI" id="CHEBI:15378"/>
        <dbReference type="ChEBI" id="CHEBI:143810"/>
        <dbReference type="ChEBI" id="CHEBI:192533"/>
    </reaction>
    <physiologicalReaction direction="left-to-right" evidence="3">
        <dbReference type="Rhea" id="RHEA:72868"/>
    </physiologicalReaction>
</comment>
<comment type="catalytic activity">
    <reaction evidence="3">
        <text>3',3'-cGAMP + H2O = G[3'-5']pAp[3'] + H(+)</text>
        <dbReference type="Rhea" id="RHEA:72831"/>
        <dbReference type="ChEBI" id="CHEBI:15377"/>
        <dbReference type="ChEBI" id="CHEBI:15378"/>
        <dbReference type="ChEBI" id="CHEBI:71501"/>
        <dbReference type="ChEBI" id="CHEBI:192497"/>
    </reaction>
    <physiologicalReaction direction="left-to-right" evidence="3">
        <dbReference type="Rhea" id="RHEA:72832"/>
    </physiologicalReaction>
</comment>
<comment type="similarity">
    <text evidence="5">Belongs to the anti-CBASS protein Acb1 family.</text>
</comment>
<evidence type="ECO:0000250" key="1">
    <source>
        <dbReference type="UniProtKB" id="A0A868BQY3"/>
    </source>
</evidence>
<evidence type="ECO:0000250" key="2">
    <source>
        <dbReference type="UniProtKB" id="P04533"/>
    </source>
</evidence>
<evidence type="ECO:0000269" key="3">
    <source>
    </source>
</evidence>
<evidence type="ECO:0000303" key="4">
    <source>
    </source>
</evidence>
<evidence type="ECO:0000305" key="5"/>
<evidence type="ECO:0000312" key="6">
    <source>
        <dbReference type="EMBL" id="ADI96391.1"/>
    </source>
</evidence>
<proteinExistence type="evidence at protein level"/>
<accession>E5EYS5</accession>
<gene>
    <name evidence="6" type="primary">57B</name>
    <name evidence="6" type="ORF">Ac42p153</name>
</gene>
<name>ACB1_BPAC4</name>
<dbReference type="EMBL" id="HM032710">
    <property type="protein sequence ID" value="ADI96391.1"/>
    <property type="molecule type" value="Genomic_DNA"/>
</dbReference>
<dbReference type="RefSeq" id="YP_004009515.1">
    <property type="nucleotide sequence ID" value="NC_014660.1"/>
</dbReference>
<dbReference type="SMR" id="E5EYS5"/>
<dbReference type="GeneID" id="9925780"/>
<dbReference type="KEGG" id="vg:9925780"/>
<dbReference type="OrthoDB" id="11210at10239"/>
<dbReference type="Proteomes" id="UP000008732">
    <property type="component" value="Genome"/>
</dbReference>
<dbReference type="GO" id="GO:0016787">
    <property type="term" value="F:hydrolase activity"/>
    <property type="evidence" value="ECO:0007669"/>
    <property type="project" value="UniProtKB-KW"/>
</dbReference>
<dbReference type="GO" id="GO:0052170">
    <property type="term" value="P:symbiont-mediated suppression of host innate immune response"/>
    <property type="evidence" value="ECO:0007669"/>
    <property type="project" value="UniProtKB-KW"/>
</dbReference>
<dbReference type="InterPro" id="IPR056175">
    <property type="entry name" value="Acb1-like_C"/>
</dbReference>
<dbReference type="InterPro" id="IPR009097">
    <property type="entry name" value="Cyclic_Pdiesterase"/>
</dbReference>
<dbReference type="Pfam" id="PF23474">
    <property type="entry name" value="Acb1"/>
    <property type="match status" value="1"/>
</dbReference>
<dbReference type="SUPFAM" id="SSF55144">
    <property type="entry name" value="LigT-like"/>
    <property type="match status" value="1"/>
</dbReference>